<organism>
    <name type="scientific">Oceanobacillus iheyensis (strain DSM 14371 / CIP 107618 / JCM 11309 / KCTC 3954 / HTE831)</name>
    <dbReference type="NCBI Taxonomy" id="221109"/>
    <lineage>
        <taxon>Bacteria</taxon>
        <taxon>Bacillati</taxon>
        <taxon>Bacillota</taxon>
        <taxon>Bacilli</taxon>
        <taxon>Bacillales</taxon>
        <taxon>Bacillaceae</taxon>
        <taxon>Oceanobacillus</taxon>
    </lineage>
</organism>
<keyword id="KW-0067">ATP-binding</keyword>
<keyword id="KW-0963">Cytoplasm</keyword>
<keyword id="KW-0418">Kinase</keyword>
<keyword id="KW-0547">Nucleotide-binding</keyword>
<keyword id="KW-1185">Reference proteome</keyword>
<keyword id="KW-0808">Transferase</keyword>
<proteinExistence type="inferred from homology"/>
<gene>
    <name evidence="1" type="primary">gmk</name>
    <name type="ordered locus">OB1502</name>
</gene>
<feature type="chain" id="PRO_0000170576" description="Guanylate kinase">
    <location>
        <begin position="1"/>
        <end position="206"/>
    </location>
</feature>
<feature type="domain" description="Guanylate kinase-like" evidence="1">
    <location>
        <begin position="6"/>
        <end position="184"/>
    </location>
</feature>
<feature type="binding site" evidence="1">
    <location>
        <begin position="13"/>
        <end position="20"/>
    </location>
    <ligand>
        <name>ATP</name>
        <dbReference type="ChEBI" id="CHEBI:30616"/>
    </ligand>
</feature>
<name>KGUA_OCEIH</name>
<dbReference type="EC" id="2.7.4.8" evidence="1"/>
<dbReference type="EMBL" id="BA000028">
    <property type="protein sequence ID" value="BAC13458.1"/>
    <property type="molecule type" value="Genomic_DNA"/>
</dbReference>
<dbReference type="RefSeq" id="WP_011065903.1">
    <property type="nucleotide sequence ID" value="NC_004193.1"/>
</dbReference>
<dbReference type="SMR" id="Q8ER28"/>
<dbReference type="STRING" id="221109.gene:10733742"/>
<dbReference type="KEGG" id="oih:OB1502"/>
<dbReference type="eggNOG" id="COG0194">
    <property type="taxonomic scope" value="Bacteria"/>
</dbReference>
<dbReference type="HOGENOM" id="CLU_001715_1_2_9"/>
<dbReference type="OrthoDB" id="9808150at2"/>
<dbReference type="PhylomeDB" id="Q8ER28"/>
<dbReference type="Proteomes" id="UP000000822">
    <property type="component" value="Chromosome"/>
</dbReference>
<dbReference type="GO" id="GO:0005829">
    <property type="term" value="C:cytosol"/>
    <property type="evidence" value="ECO:0007669"/>
    <property type="project" value="TreeGrafter"/>
</dbReference>
<dbReference type="GO" id="GO:0005524">
    <property type="term" value="F:ATP binding"/>
    <property type="evidence" value="ECO:0007669"/>
    <property type="project" value="UniProtKB-UniRule"/>
</dbReference>
<dbReference type="GO" id="GO:0004385">
    <property type="term" value="F:guanylate kinase activity"/>
    <property type="evidence" value="ECO:0007669"/>
    <property type="project" value="UniProtKB-UniRule"/>
</dbReference>
<dbReference type="CDD" id="cd00071">
    <property type="entry name" value="GMPK"/>
    <property type="match status" value="1"/>
</dbReference>
<dbReference type="FunFam" id="3.40.50.300:FF:000855">
    <property type="entry name" value="Guanylate kinase"/>
    <property type="match status" value="1"/>
</dbReference>
<dbReference type="FunFam" id="3.30.63.10:FF:000002">
    <property type="entry name" value="Guanylate kinase 1"/>
    <property type="match status" value="1"/>
</dbReference>
<dbReference type="Gene3D" id="3.30.63.10">
    <property type="entry name" value="Guanylate Kinase phosphate binding domain"/>
    <property type="match status" value="1"/>
</dbReference>
<dbReference type="Gene3D" id="3.40.50.300">
    <property type="entry name" value="P-loop containing nucleotide triphosphate hydrolases"/>
    <property type="match status" value="1"/>
</dbReference>
<dbReference type="HAMAP" id="MF_00328">
    <property type="entry name" value="Guanylate_kinase"/>
    <property type="match status" value="1"/>
</dbReference>
<dbReference type="InterPro" id="IPR008145">
    <property type="entry name" value="GK/Ca_channel_bsu"/>
</dbReference>
<dbReference type="InterPro" id="IPR008144">
    <property type="entry name" value="Guanylate_kin-like_dom"/>
</dbReference>
<dbReference type="InterPro" id="IPR017665">
    <property type="entry name" value="Guanylate_kinase"/>
</dbReference>
<dbReference type="InterPro" id="IPR020590">
    <property type="entry name" value="Guanylate_kinase_CS"/>
</dbReference>
<dbReference type="InterPro" id="IPR027417">
    <property type="entry name" value="P-loop_NTPase"/>
</dbReference>
<dbReference type="NCBIfam" id="TIGR03263">
    <property type="entry name" value="guanyl_kin"/>
    <property type="match status" value="1"/>
</dbReference>
<dbReference type="PANTHER" id="PTHR23117:SF13">
    <property type="entry name" value="GUANYLATE KINASE"/>
    <property type="match status" value="1"/>
</dbReference>
<dbReference type="PANTHER" id="PTHR23117">
    <property type="entry name" value="GUANYLATE KINASE-RELATED"/>
    <property type="match status" value="1"/>
</dbReference>
<dbReference type="Pfam" id="PF00625">
    <property type="entry name" value="Guanylate_kin"/>
    <property type="match status" value="1"/>
</dbReference>
<dbReference type="SMART" id="SM00072">
    <property type="entry name" value="GuKc"/>
    <property type="match status" value="1"/>
</dbReference>
<dbReference type="SUPFAM" id="SSF52540">
    <property type="entry name" value="P-loop containing nucleoside triphosphate hydrolases"/>
    <property type="match status" value="1"/>
</dbReference>
<dbReference type="PROSITE" id="PS00856">
    <property type="entry name" value="GUANYLATE_KINASE_1"/>
    <property type="match status" value="1"/>
</dbReference>
<dbReference type="PROSITE" id="PS50052">
    <property type="entry name" value="GUANYLATE_KINASE_2"/>
    <property type="match status" value="1"/>
</dbReference>
<sequence>MIKEKGILFILSGPSGVGKGTVRKKLFEEETDLQYSISMTTRDRRPGEVDGVDYFYKTKEEFEQLIKDGQLLEYAQYVNNYYGTPRNYVEETLENGQDVFLEIEVQGALQVKENFPEGVFIFLFPPSLDELKNRIVSRGTESQELVLNRLKEARNEIEMMDAYDYVVVNDKVQHAVDKVKTIIKSEHLKRERIAKQYKKILEDGLS</sequence>
<evidence type="ECO:0000255" key="1">
    <source>
        <dbReference type="HAMAP-Rule" id="MF_00328"/>
    </source>
</evidence>
<comment type="function">
    <text evidence="1">Essential for recycling GMP and indirectly, cGMP.</text>
</comment>
<comment type="catalytic activity">
    <reaction evidence="1">
        <text>GMP + ATP = GDP + ADP</text>
        <dbReference type="Rhea" id="RHEA:20780"/>
        <dbReference type="ChEBI" id="CHEBI:30616"/>
        <dbReference type="ChEBI" id="CHEBI:58115"/>
        <dbReference type="ChEBI" id="CHEBI:58189"/>
        <dbReference type="ChEBI" id="CHEBI:456216"/>
        <dbReference type="EC" id="2.7.4.8"/>
    </reaction>
</comment>
<comment type="subcellular location">
    <subcellularLocation>
        <location evidence="1">Cytoplasm</location>
    </subcellularLocation>
</comment>
<comment type="similarity">
    <text evidence="1">Belongs to the guanylate kinase family.</text>
</comment>
<protein>
    <recommendedName>
        <fullName evidence="1">Guanylate kinase</fullName>
        <ecNumber evidence="1">2.7.4.8</ecNumber>
    </recommendedName>
    <alternativeName>
        <fullName evidence="1">GMP kinase</fullName>
    </alternativeName>
</protein>
<reference key="1">
    <citation type="journal article" date="2002" name="Nucleic Acids Res.">
        <title>Genome sequence of Oceanobacillus iheyensis isolated from the Iheya Ridge and its unexpected adaptive capabilities to extreme environments.</title>
        <authorList>
            <person name="Takami H."/>
            <person name="Takaki Y."/>
            <person name="Uchiyama I."/>
        </authorList>
    </citation>
    <scope>NUCLEOTIDE SEQUENCE [LARGE SCALE GENOMIC DNA]</scope>
    <source>
        <strain>DSM 14371 / CIP 107618 / JCM 11309 / KCTC 3954 / HTE831</strain>
    </source>
</reference>
<accession>Q8ER28</accession>